<organismHost>
    <name type="scientific">Homo sapiens</name>
    <name type="common">Human</name>
    <dbReference type="NCBI Taxonomy" id="9606"/>
</organismHost>
<reference key="1">
    <citation type="journal article" date="1998" name="J. Virol.">
        <title>A comprehensive panel of near-full-length clones and reference sequences for non-subtype B isolates of human immunodeficiency virus type 1.</title>
        <authorList>
            <person name="Gao F."/>
            <person name="Robertson D.L."/>
            <person name="Carruthers C.D."/>
            <person name="Morrison S.G."/>
            <person name="Jian B."/>
            <person name="Chen Y."/>
            <person name="Barre-Sinoussi F."/>
            <person name="Girard M."/>
            <person name="Srinivasan A."/>
            <person name="Abimiku A.G."/>
            <person name="Shaw G.M."/>
            <person name="Sharp P.M."/>
            <person name="Hahn B.H."/>
        </authorList>
    </citation>
    <scope>NUCLEOTIDE SEQUENCE [GENOMIC DNA]</scope>
</reference>
<evidence type="ECO:0000255" key="1">
    <source>
        <dbReference type="HAMAP-Rule" id="MF_04078"/>
    </source>
</evidence>
<protein>
    <recommendedName>
        <fullName evidence="1">Protein Nef</fullName>
    </recommendedName>
    <alternativeName>
        <fullName evidence="1">3'ORF</fullName>
    </alternativeName>
    <alternativeName>
        <fullName evidence="1">Negative factor</fullName>
        <shortName evidence="1">F-protein</shortName>
    </alternativeName>
    <component>
        <recommendedName>
            <fullName evidence="1">C-terminal core protein</fullName>
        </recommendedName>
    </component>
</protein>
<accession>O70903</accession>
<dbReference type="EMBL" id="AF005496">
    <property type="protein sequence ID" value="AAD03187.1"/>
    <property type="molecule type" value="Genomic_DNA"/>
</dbReference>
<dbReference type="SMR" id="O70903"/>
<dbReference type="DIP" id="DIP-60909N"/>
<dbReference type="IntAct" id="O70903">
    <property type="interactions" value="1"/>
</dbReference>
<dbReference type="Proteomes" id="UP000007685">
    <property type="component" value="Segment"/>
</dbReference>
<dbReference type="GO" id="GO:0005576">
    <property type="term" value="C:extracellular region"/>
    <property type="evidence" value="ECO:0007669"/>
    <property type="project" value="UniProtKB-SubCell"/>
</dbReference>
<dbReference type="GO" id="GO:0044178">
    <property type="term" value="C:host cell Golgi membrane"/>
    <property type="evidence" value="ECO:0007669"/>
    <property type="project" value="UniProtKB-SubCell"/>
</dbReference>
<dbReference type="GO" id="GO:0020002">
    <property type="term" value="C:host cell plasma membrane"/>
    <property type="evidence" value="ECO:0007669"/>
    <property type="project" value="UniProtKB-SubCell"/>
</dbReference>
<dbReference type="GO" id="GO:0016020">
    <property type="term" value="C:membrane"/>
    <property type="evidence" value="ECO:0007669"/>
    <property type="project" value="UniProtKB-UniRule"/>
</dbReference>
<dbReference type="GO" id="GO:0044423">
    <property type="term" value="C:virion component"/>
    <property type="evidence" value="ECO:0007669"/>
    <property type="project" value="UniProtKB-UniRule"/>
</dbReference>
<dbReference type="GO" id="GO:0005525">
    <property type="term" value="F:GTP binding"/>
    <property type="evidence" value="ECO:0007669"/>
    <property type="project" value="UniProtKB-UniRule"/>
</dbReference>
<dbReference type="GO" id="GO:0017124">
    <property type="term" value="F:SH3 domain binding"/>
    <property type="evidence" value="ECO:0007669"/>
    <property type="project" value="UniProtKB-UniRule"/>
</dbReference>
<dbReference type="GO" id="GO:0046776">
    <property type="term" value="P:symbiont-mediated suppression of host antigen processing and presentation of peptide antigen via MHC class I"/>
    <property type="evidence" value="ECO:0007669"/>
    <property type="project" value="UniProtKB-UniRule"/>
</dbReference>
<dbReference type="GO" id="GO:0039505">
    <property type="term" value="P:symbiont-mediated suppression of host antigen processing and presentation of peptide antigen via MHC class II"/>
    <property type="evidence" value="ECO:0007669"/>
    <property type="project" value="UniProtKB-UniRule"/>
</dbReference>
<dbReference type="GO" id="GO:0140321">
    <property type="term" value="P:symbiont-mediated suppression of host autophagy"/>
    <property type="evidence" value="ECO:0007669"/>
    <property type="project" value="UniProtKB-KW"/>
</dbReference>
<dbReference type="Gene3D" id="4.10.890.10">
    <property type="entry name" value="HIV 1 nef anchor domain"/>
    <property type="match status" value="1"/>
</dbReference>
<dbReference type="Gene3D" id="3.30.62.10">
    <property type="entry name" value="Nef Regulatory Factor"/>
    <property type="match status" value="1"/>
</dbReference>
<dbReference type="HAMAP" id="MF_04078">
    <property type="entry name" value="NEF_HIV"/>
    <property type="match status" value="1"/>
</dbReference>
<dbReference type="InterPro" id="IPR027480">
    <property type="entry name" value="HIV-1_Nef_anchor_sf"/>
</dbReference>
<dbReference type="InterPro" id="IPR027481">
    <property type="entry name" value="HIV-1_Nef_core_sf"/>
</dbReference>
<dbReference type="InterPro" id="IPR001558">
    <property type="entry name" value="HIV_Nef"/>
</dbReference>
<dbReference type="Pfam" id="PF00469">
    <property type="entry name" value="F-protein"/>
    <property type="match status" value="1"/>
</dbReference>
<dbReference type="SUPFAM" id="SSF55671">
    <property type="entry name" value="Regulatory factor Nef"/>
    <property type="match status" value="1"/>
</dbReference>
<keyword id="KW-0014">AIDS</keyword>
<keyword id="KW-0053">Apoptosis</keyword>
<keyword id="KW-0244">Early protein</keyword>
<keyword id="KW-1032">Host cell membrane</keyword>
<keyword id="KW-1040">Host Golgi apparatus</keyword>
<keyword id="KW-1043">Host membrane</keyword>
<keyword id="KW-0945">Host-virus interaction</keyword>
<keyword id="KW-1080">Inhibition of host adaptive immune response by virus</keyword>
<keyword id="KW-1083">Inhibition of host autophagy by virus</keyword>
<keyword id="KW-1115">Inhibition of host MHC class I molecule presentation by virus</keyword>
<keyword id="KW-1116">Inhibition of host MHC class II molecule presentation by virus</keyword>
<keyword id="KW-0449">Lipoprotein</keyword>
<keyword id="KW-0472">Membrane</keyword>
<keyword id="KW-0519">Myristate</keyword>
<keyword id="KW-0597">Phosphoprotein</keyword>
<keyword id="KW-1185">Reference proteome</keyword>
<keyword id="KW-0964">Secreted</keyword>
<keyword id="KW-0729">SH3-binding</keyword>
<keyword id="KW-0899">Viral immunoevasion</keyword>
<keyword id="KW-0946">Virion</keyword>
<keyword id="KW-0843">Virulence</keyword>
<name>NEF_HV190</name>
<comment type="function">
    <text evidence="1">Factor of infectivity and pathogenicity, required for optimal virus replication. Alters numerous pathways of T-lymphocyte function and down-regulates immunity surface molecules in order to evade host defense and increase viral infectivity. Alters the functionality of other immunity cells, like dendritic cells, monocytes/macrophages and NK cells.</text>
</comment>
<comment type="function">
    <text evidence="1">In infected CD4(+) T-lymphocytes, down-regulates the surface MHC-I, mature MHC-II, CD4, CD28, CCR5 and CXCR4 molecules. Mediates internalization and degradation of host CD4 through the interaction of with the cytoplasmic tail of CD4, the recruitment of AP-2 (clathrin adapter protein complex 2), internalization through clathrin coated pits, and subsequent transport to endosomes and lysosomes for degradation. Diverts host MHC-I molecules to the trans-Golgi network-associated endosomal compartments by an endocytic pathway to finally target them for degradation. MHC-I down-regulation may involve AP-1 (clathrin adapter protein complex 1) or possibly Src family kinase-ZAP70/Syk-PI3K cascade recruited by PACS2. In consequence infected cells are masked for immune recognition by cytotoxic T-lymphocytes. Decreasing the number of immune receptors also prevents reinfection by more HIV particles (superinfection). Down-regulates host SERINC3 and SERINC5 thereby excluding these proteins from the viral particles. Virion infectivity is drastically higher when SERINC3 or SERINC5 are excluded from the viral envelope, because these host antiviral proteins impair the membrane fusion event necessary for subsequent virion penetration.</text>
</comment>
<comment type="function">
    <text evidence="1">Bypasses host T-cell signaling by inducing a transcriptional program nearly identical to that of anti-CD3 cell activation. Interaction with TCR-zeta chain up-regulates the Fas ligand (FasL). Increasing surface FasL molecules and decreasing surface MHC-I molecules on infected CD4(+) cells send attacking cytotoxic CD8+ T-lymphocytes into apoptosis.</text>
</comment>
<comment type="function">
    <text evidence="1">Plays a role in optimizing the host cell environment for viral replication without causing cell death by apoptosis. Protects the infected cells from apoptosis in order to keep them alive until the next virus generation is ready to strike. Inhibits the Fas and TNFR-mediated death signals by blocking MAP3K5/ASK1. Decreases the half-life of TP53, protecting the infected cell against p53-mediated apoptosis. Inhibits the apoptotic signals regulated by the Bcl-2 family proteins through the formation of a Nef/PI3-kinase/PAK2 complex that leads to activation of PAK2 and induces phosphorylation of host BAD.</text>
</comment>
<comment type="function">
    <text evidence="1">Extracellular Nef protein targets CD4(+) T-lymphocytes for apoptosis by interacting with CXCR4 surface receptors.</text>
</comment>
<comment type="subunit">
    <text evidence="1">Monomer; cytosolic form. Homodimer; membrane bound form. Interacts with Nef associated p21-activated kinase (PAK2); this interaction activates PAK2. Associates with the Nef-MHC-I-AP1 complex; this complex is required for MHC-I internalization. Interacts (via C-terminus) with host PI3-kinase. Interacts with host PACS1; this interaction seems to be weak. Interacts with host PACS2. Interacts with host LCK and MAPK3; these interactions inhibit the kinase activity of the latter. Interacts with host ATP6V1H; this interaction may play a role in CD4 endocytosis. Associates with the CD4-Nef-AP2 complex; this complex is required for CD4 internalization. Interacts with host AP2 subunit alpha and AP2 subunit sigma2. Interacts with TCR-zeta chain; this interaction up-regulates the Fas ligand (FasL) surface expression. Interacts with host HCK, LYN, and SRC; these interactions activate the Src family kinases. Interacts with MAP3K5; this interaction inhibits the Fas and TNFR-mediated death signals. Interacts with beta-COP and PTE1. Interacts with human RACK1; this increases Nef phosphorylation by PKC. Interacts with TP53; this interaction decreases the half-life of TP53, protecting the infected cell against p53-mediated apoptosis.</text>
</comment>
<comment type="subcellular location">
    <subcellularLocation>
        <location evidence="1">Host cell membrane</location>
        <topology evidence="1">Lipid-anchor</topology>
        <orientation evidence="1">Cytoplasmic side</orientation>
    </subcellularLocation>
    <subcellularLocation>
        <location evidence="1">Virion</location>
    </subcellularLocation>
    <subcellularLocation>
        <location evidence="1">Secreted</location>
    </subcellularLocation>
    <subcellularLocation>
        <location evidence="1">Host Golgi apparatus membrane</location>
    </subcellularLocation>
    <text evidence="1">TGN localization requires PACS1. Associates with the inner plasma membrane through its N-terminal domain. Nef stimulates its own export via the release of exosomes. Incorporated in virions at a rate of about 10 molecules per virion, where it is cleaved.</text>
</comment>
<comment type="induction">
    <text evidence="1">Expressed early in the viral replication cycle.</text>
</comment>
<comment type="domain">
    <text evidence="1">The N-terminal domain is composed of the N-myristoyl glycine and of a cluster of positively charged amino acids. It is required for inner plasma membrane targeting of Nef and virion incorporation, and thereby for infectivity. This domain is also involved in binding to TP53.</text>
</comment>
<comment type="domain">
    <text evidence="1">The SH3-binding domain constituted of PxxP motifs mediates binding to several Src family proteins thereby regulating their tyrosine kinase activity. The same motifs also mediates the association with MAPK3, PI3-kinase and TCR-zeta.</text>
</comment>
<comment type="domain">
    <text evidence="1">The dileucine internalization motif and a diacidic motif seem to be required for binding to AP-2.</text>
</comment>
<comment type="domain">
    <text evidence="1">The acidic region binds to the sorting protein PACS-2, which targets Nef to the paranuclear region, enabling the PxxP motif to direct assembly of an SFK/ZAP-70/PI3K complex that accelerates endocytosis of cell-surface MHC-I.</text>
</comment>
<comment type="PTM">
    <text evidence="1">The virion-associated Nef proteins are cleaved by the viral protease to release the soluble C-terminal core protein. Nef is probably cleaved concomitantly with viral structural proteins on maturation of virus particles.</text>
</comment>
<comment type="PTM">
    <text evidence="1">Myristoylated.</text>
</comment>
<comment type="PTM">
    <text evidence="1">Phosphorylated on serine residues, probably by host PKCdelta and theta.</text>
</comment>
<comment type="miscellaneous">
    <text evidence="1">HIV-1 lineages are divided in three main groups, M (for Major), O (for Outlier), and N (for New, or Non-M, Non-O). The vast majority of strains found worldwide belong to the group M. Group O seems to be endemic to and largely confined to Cameroon and neighboring countries in West Central Africa, where these viruses represent a small minority of HIV-1 strains. The group N is represented by a limited number of isolates from Cameroonian persons. The group M is further subdivided in 9 clades or subtypes (A to D, F to H, J and K).</text>
</comment>
<comment type="similarity">
    <text evidence="1">Belongs to the lentivirus primate group Nef protein family.</text>
</comment>
<proteinExistence type="inferred from homology"/>
<feature type="initiator methionine" description="Removed; by host" evidence="1">
    <location>
        <position position="1"/>
    </location>
</feature>
<feature type="chain" id="PRO_0000244783" description="Protein Nef" evidence="1">
    <location>
        <begin position="2"/>
        <end position="206"/>
    </location>
</feature>
<feature type="chain" id="PRO_0000244784" description="C-terminal core protein" evidence="1">
    <location>
        <begin position="58"/>
        <end position="206"/>
    </location>
</feature>
<feature type="region of interest" description="Acidic; interacts with host PACS1 and PACS2; stabilizes the interaction of NEF/MHC-I with host AP1M1; necessary for MHC-I internalization" evidence="1">
    <location>
        <begin position="62"/>
        <end position="66"/>
    </location>
</feature>
<feature type="region of interest" description="SH3-binding; interaction with Src family tyrosine kinases" evidence="1">
    <location>
        <begin position="70"/>
        <end position="79"/>
    </location>
</feature>
<feature type="region of interest" description="Mediates dimerization, Nef-PTE1 interaction" evidence="1">
    <location>
        <begin position="109"/>
        <end position="125"/>
    </location>
</feature>
<feature type="region of interest" description="Binding to ATP6V1H" evidence="1">
    <location>
        <begin position="149"/>
        <end position="181"/>
    </location>
</feature>
<feature type="short sequence motif" description="PxxP; stabilizes the interaction of NEF/MHC-I with host AP1M1; necessary for MHC-I internalization" evidence="1">
    <location>
        <begin position="73"/>
        <end position="76"/>
    </location>
</feature>
<feature type="short sequence motif" description="Dileucine internalization motif; necessary for CD4 internalization" evidence="1">
    <location>
        <begin position="165"/>
        <end position="166"/>
    </location>
</feature>
<feature type="short sequence motif" description="Diacidic; necessary for CD4 internalization" evidence="1">
    <location>
        <begin position="175"/>
        <end position="176"/>
    </location>
</feature>
<feature type="site" description="Might play a role in AP-1 recruitment to the Nef-MHC-I complex" evidence="1">
    <location>
        <position position="20"/>
    </location>
</feature>
<feature type="site" description="Cleavage; by viral protease" evidence="1">
    <location>
        <begin position="57"/>
        <end position="58"/>
    </location>
</feature>
<feature type="modified residue" description="Phosphoserine; by host" evidence="1">
    <location>
        <position position="6"/>
    </location>
</feature>
<feature type="lipid moiety-binding region" description="N-myristoyl glycine; by host" evidence="1">
    <location>
        <position position="2"/>
    </location>
</feature>
<organism>
    <name type="scientific">Human immunodeficiency virus type 1 group M subtype H (isolate 90CF056)</name>
    <name type="common">HIV-1</name>
    <dbReference type="NCBI Taxonomy" id="388826"/>
    <lineage>
        <taxon>Viruses</taxon>
        <taxon>Riboviria</taxon>
        <taxon>Pararnavirae</taxon>
        <taxon>Artverviricota</taxon>
        <taxon>Revtraviricetes</taxon>
        <taxon>Ortervirales</taxon>
        <taxon>Retroviridae</taxon>
        <taxon>Orthoretrovirinae</taxon>
        <taxon>Lentivirus</taxon>
        <taxon>Human immunodeficiency virus type 1</taxon>
    </lineage>
</organism>
<sequence>MGGKWSKSRMGGWSTIRERMRRAEPVAEGVGAVSRDLDRRGAVTINNTASTNRDAAWLEAQEDGEEVGFPVRPQVPLRPMTYKGAFDLSHFLKEKGGLDGLIYSKQRQDILDLWVYNTQGYFPDWQNYTPGPGERFPLTFGWCFKLVPVNPQEVEQANEGENNSLLHPMSLHGMEDDGREVLMWKFDSRLALTHLARVKHPEYKDC</sequence>
<gene>
    <name evidence="1" type="primary">nef</name>
</gene>